<organism>
    <name type="scientific">Wolbachia pipientis wMel</name>
    <dbReference type="NCBI Taxonomy" id="163164"/>
    <lineage>
        <taxon>Bacteria</taxon>
        <taxon>Pseudomonadati</taxon>
        <taxon>Pseudomonadota</taxon>
        <taxon>Alphaproteobacteria</taxon>
        <taxon>Rickettsiales</taxon>
        <taxon>Anaplasmataceae</taxon>
        <taxon>Wolbachieae</taxon>
        <taxon>Wolbachia</taxon>
    </lineage>
</organism>
<protein>
    <recommendedName>
        <fullName evidence="1">5'-nucleotidase SurE</fullName>
        <ecNumber evidence="1">3.1.3.5</ecNumber>
    </recommendedName>
    <alternativeName>
        <fullName evidence="1">Nucleoside 5'-monophosphate phosphohydrolase</fullName>
    </alternativeName>
</protein>
<dbReference type="EC" id="3.1.3.5" evidence="1"/>
<dbReference type="EMBL" id="AE017196">
    <property type="protein sequence ID" value="AAS14732.1"/>
    <property type="molecule type" value="Genomic_DNA"/>
</dbReference>
<dbReference type="RefSeq" id="WP_010963027.1">
    <property type="nucleotide sequence ID" value="NZ_OX384529.1"/>
</dbReference>
<dbReference type="SMR" id="Q73G84"/>
<dbReference type="EnsemblBacteria" id="AAS14732">
    <property type="protein sequence ID" value="AAS14732"/>
    <property type="gene ID" value="WD_1077"/>
</dbReference>
<dbReference type="GeneID" id="70036554"/>
<dbReference type="KEGG" id="wol:WD_1077"/>
<dbReference type="eggNOG" id="COG0496">
    <property type="taxonomic scope" value="Bacteria"/>
</dbReference>
<dbReference type="Proteomes" id="UP000008215">
    <property type="component" value="Chromosome"/>
</dbReference>
<dbReference type="GO" id="GO:0005737">
    <property type="term" value="C:cytoplasm"/>
    <property type="evidence" value="ECO:0007669"/>
    <property type="project" value="UniProtKB-SubCell"/>
</dbReference>
<dbReference type="GO" id="GO:0008254">
    <property type="term" value="F:3'-nucleotidase activity"/>
    <property type="evidence" value="ECO:0007669"/>
    <property type="project" value="TreeGrafter"/>
</dbReference>
<dbReference type="GO" id="GO:0008253">
    <property type="term" value="F:5'-nucleotidase activity"/>
    <property type="evidence" value="ECO:0007669"/>
    <property type="project" value="UniProtKB-UniRule"/>
</dbReference>
<dbReference type="GO" id="GO:0004309">
    <property type="term" value="F:exopolyphosphatase activity"/>
    <property type="evidence" value="ECO:0007669"/>
    <property type="project" value="TreeGrafter"/>
</dbReference>
<dbReference type="GO" id="GO:0046872">
    <property type="term" value="F:metal ion binding"/>
    <property type="evidence" value="ECO:0007669"/>
    <property type="project" value="UniProtKB-UniRule"/>
</dbReference>
<dbReference type="GO" id="GO:0000166">
    <property type="term" value="F:nucleotide binding"/>
    <property type="evidence" value="ECO:0007669"/>
    <property type="project" value="UniProtKB-KW"/>
</dbReference>
<dbReference type="Gene3D" id="3.40.1210.10">
    <property type="entry name" value="Survival protein SurE-like phosphatase/nucleotidase"/>
    <property type="match status" value="1"/>
</dbReference>
<dbReference type="HAMAP" id="MF_00060">
    <property type="entry name" value="SurE"/>
    <property type="match status" value="1"/>
</dbReference>
<dbReference type="InterPro" id="IPR030048">
    <property type="entry name" value="SurE"/>
</dbReference>
<dbReference type="InterPro" id="IPR002828">
    <property type="entry name" value="SurE-like_Pase/nucleotidase"/>
</dbReference>
<dbReference type="InterPro" id="IPR036523">
    <property type="entry name" value="SurE-like_sf"/>
</dbReference>
<dbReference type="NCBIfam" id="NF001490">
    <property type="entry name" value="PRK00346.1-4"/>
    <property type="match status" value="1"/>
</dbReference>
<dbReference type="NCBIfam" id="TIGR00087">
    <property type="entry name" value="surE"/>
    <property type="match status" value="1"/>
</dbReference>
<dbReference type="PANTHER" id="PTHR30457">
    <property type="entry name" value="5'-NUCLEOTIDASE SURE"/>
    <property type="match status" value="1"/>
</dbReference>
<dbReference type="PANTHER" id="PTHR30457:SF12">
    <property type="entry name" value="5'_3'-NUCLEOTIDASE SURE"/>
    <property type="match status" value="1"/>
</dbReference>
<dbReference type="Pfam" id="PF01975">
    <property type="entry name" value="SurE"/>
    <property type="match status" value="1"/>
</dbReference>
<dbReference type="SUPFAM" id="SSF64167">
    <property type="entry name" value="SurE-like"/>
    <property type="match status" value="1"/>
</dbReference>
<keyword id="KW-0963">Cytoplasm</keyword>
<keyword id="KW-0378">Hydrolase</keyword>
<keyword id="KW-0479">Metal-binding</keyword>
<keyword id="KW-0547">Nucleotide-binding</keyword>
<reference key="1">
    <citation type="journal article" date="2004" name="PLoS Biol.">
        <title>Phylogenomics of the reproductive parasite Wolbachia pipientis wMel: a streamlined genome overrun by mobile genetic elements.</title>
        <authorList>
            <person name="Wu M."/>
            <person name="Sun L.V."/>
            <person name="Vamathevan J.J."/>
            <person name="Riegler M."/>
            <person name="DeBoy R.T."/>
            <person name="Brownlie J.C."/>
            <person name="McGraw E.A."/>
            <person name="Martin W."/>
            <person name="Esser C."/>
            <person name="Ahmadinejad N."/>
            <person name="Wiegand C."/>
            <person name="Madupu R."/>
            <person name="Beanan M.J."/>
            <person name="Brinkac L.M."/>
            <person name="Daugherty S.C."/>
            <person name="Durkin A.S."/>
            <person name="Kolonay J.F."/>
            <person name="Nelson W.C."/>
            <person name="Mohamoud Y."/>
            <person name="Lee P."/>
            <person name="Berry K.J."/>
            <person name="Young M.B."/>
            <person name="Utterback T.R."/>
            <person name="Weidman J.F."/>
            <person name="Nierman W.C."/>
            <person name="Paulsen I.T."/>
            <person name="Nelson K.E."/>
            <person name="Tettelin H."/>
            <person name="O'Neill S.L."/>
            <person name="Eisen J.A."/>
        </authorList>
    </citation>
    <scope>NUCLEOTIDE SEQUENCE [LARGE SCALE GENOMIC DNA]</scope>
</reference>
<accession>Q73G84</accession>
<proteinExistence type="inferred from homology"/>
<evidence type="ECO:0000255" key="1">
    <source>
        <dbReference type="HAMAP-Rule" id="MF_00060"/>
    </source>
</evidence>
<comment type="function">
    <text evidence="1">Nucleotidase that shows phosphatase activity on nucleoside 5'-monophosphates.</text>
</comment>
<comment type="catalytic activity">
    <reaction evidence="1">
        <text>a ribonucleoside 5'-phosphate + H2O = a ribonucleoside + phosphate</text>
        <dbReference type="Rhea" id="RHEA:12484"/>
        <dbReference type="ChEBI" id="CHEBI:15377"/>
        <dbReference type="ChEBI" id="CHEBI:18254"/>
        <dbReference type="ChEBI" id="CHEBI:43474"/>
        <dbReference type="ChEBI" id="CHEBI:58043"/>
        <dbReference type="EC" id="3.1.3.5"/>
    </reaction>
</comment>
<comment type="cofactor">
    <cofactor evidence="1">
        <name>a divalent metal cation</name>
        <dbReference type="ChEBI" id="CHEBI:60240"/>
    </cofactor>
    <text evidence="1">Binds 1 divalent metal cation per subunit.</text>
</comment>
<comment type="subcellular location">
    <subcellularLocation>
        <location evidence="1">Cytoplasm</location>
    </subcellularLocation>
</comment>
<comment type="similarity">
    <text evidence="1">Belongs to the SurE nucleotidase family.</text>
</comment>
<gene>
    <name evidence="1" type="primary">surE</name>
    <name type="ordered locus">WD_1077</name>
</gene>
<name>SURE_WOLPM</name>
<sequence length="250" mass="27227">MIILITNDDGFGSEGIKLLKEVARNFASEIWIVAPDTDRSGAARSLDYPVKQSIGIKQHSEREFSVSGTPADCVIIALNKVMNKKPDLILSGVNIGSNVGDDICYSGTIGAVMEGAARSIPSIALSQVYHDKIDWHNTKVFAPKVIAKLVKVGWPKNIVMSVNFPAKEKVKGVEFAEQGEYNIDGDLTFTENSNGSFSLNWSREHSGSGSINKIKEGFITITPVKLDFTDYDTLNTMKNSCADEFSSIAD</sequence>
<feature type="chain" id="PRO_0000235667" description="5'-nucleotidase SurE">
    <location>
        <begin position="1"/>
        <end position="250"/>
    </location>
</feature>
<feature type="binding site" evidence="1">
    <location>
        <position position="8"/>
    </location>
    <ligand>
        <name>a divalent metal cation</name>
        <dbReference type="ChEBI" id="CHEBI:60240"/>
    </ligand>
</feature>
<feature type="binding site" evidence="1">
    <location>
        <position position="9"/>
    </location>
    <ligand>
        <name>a divalent metal cation</name>
        <dbReference type="ChEBI" id="CHEBI:60240"/>
    </ligand>
</feature>
<feature type="binding site" evidence="1">
    <location>
        <position position="40"/>
    </location>
    <ligand>
        <name>a divalent metal cation</name>
        <dbReference type="ChEBI" id="CHEBI:60240"/>
    </ligand>
</feature>
<feature type="binding site" evidence="1">
    <location>
        <position position="94"/>
    </location>
    <ligand>
        <name>a divalent metal cation</name>
        <dbReference type="ChEBI" id="CHEBI:60240"/>
    </ligand>
</feature>